<sequence>MLQINPNFIKHIEQELPSHLSMDEFILACNRPLRQSIRVNTLRISSEDFIALMTPRGWSFSPVPWCSDGFWITLTHDEQLGNCLEHIQGLFYIQEASSMLPPTALFTNDDADERAPLRVLDMASAPGSKTTQMAALMNNNGLLIANEYSASRVKVLHANVLRMGVSNCALTHFDGRVFGEYQYEAFDAVLLDAPCGGEGTVRKDQNALKEWQLDDVIAIADTQKDLIEAAFLALKPGGALVYSTCTLSQLENQAICQHLLSRYPEAVAFESLATLFDGAAKACTEEGFLHVWPQIYDSEGFFVAKMRKTASVPRIKSQPKAQKNFPFSPAPEKQIAALQDYIQQSFALSLPPGAQVYLRDDEFWLFPAPFSDFIGTMRFQRIGIKLADVLKKGFKIKHEAVIALGAKLGTNANNNSNTNPNNNANTNPNNNSNTNPRCIPLNQAQAEQFLMGRDIDTASFDGKLDLTPKGEMMVSYHGAAIGVVKHLGHRLKNSLPRELVRDNLG</sequence>
<comment type="function">
    <text evidence="1">Specifically methylates the cytosine at position 1407 (m5C1407) of 16S rRNA.</text>
</comment>
<comment type="catalytic activity">
    <reaction evidence="1">
        <text>cytidine(1407) in 16S rRNA + S-adenosyl-L-methionine = 5-methylcytidine(1407) in 16S rRNA + S-adenosyl-L-homocysteine + H(+)</text>
        <dbReference type="Rhea" id="RHEA:42756"/>
        <dbReference type="Rhea" id="RHEA-COMP:10223"/>
        <dbReference type="Rhea" id="RHEA-COMP:10224"/>
        <dbReference type="ChEBI" id="CHEBI:15378"/>
        <dbReference type="ChEBI" id="CHEBI:57856"/>
        <dbReference type="ChEBI" id="CHEBI:59789"/>
        <dbReference type="ChEBI" id="CHEBI:74483"/>
        <dbReference type="ChEBI" id="CHEBI:82748"/>
        <dbReference type="EC" id="2.1.1.178"/>
    </reaction>
</comment>
<comment type="subcellular location">
    <subcellularLocation>
        <location evidence="1">Cytoplasm</location>
    </subcellularLocation>
</comment>
<comment type="similarity">
    <text evidence="1">Belongs to the class I-like SAM-binding methyltransferase superfamily. RsmB/NOP family.</text>
</comment>
<dbReference type="EC" id="2.1.1.178" evidence="1"/>
<dbReference type="EMBL" id="CP000302">
    <property type="protein sequence ID" value="ABE55328.1"/>
    <property type="molecule type" value="Genomic_DNA"/>
</dbReference>
<dbReference type="RefSeq" id="WP_011496484.1">
    <property type="nucleotide sequence ID" value="NC_007954.1"/>
</dbReference>
<dbReference type="SMR" id="Q12MJ8"/>
<dbReference type="STRING" id="318161.Sden_2046"/>
<dbReference type="KEGG" id="sdn:Sden_2046"/>
<dbReference type="eggNOG" id="COG0144">
    <property type="taxonomic scope" value="Bacteria"/>
</dbReference>
<dbReference type="eggNOG" id="COG3270">
    <property type="taxonomic scope" value="Bacteria"/>
</dbReference>
<dbReference type="HOGENOM" id="CLU_005316_6_2_6"/>
<dbReference type="OrthoDB" id="9810297at2"/>
<dbReference type="Proteomes" id="UP000001982">
    <property type="component" value="Chromosome"/>
</dbReference>
<dbReference type="GO" id="GO:0005737">
    <property type="term" value="C:cytoplasm"/>
    <property type="evidence" value="ECO:0007669"/>
    <property type="project" value="UniProtKB-SubCell"/>
</dbReference>
<dbReference type="GO" id="GO:0003723">
    <property type="term" value="F:RNA binding"/>
    <property type="evidence" value="ECO:0007669"/>
    <property type="project" value="UniProtKB-KW"/>
</dbReference>
<dbReference type="GO" id="GO:0009383">
    <property type="term" value="F:rRNA (cytosine-C5-)-methyltransferase activity"/>
    <property type="evidence" value="ECO:0007669"/>
    <property type="project" value="TreeGrafter"/>
</dbReference>
<dbReference type="GO" id="GO:0070475">
    <property type="term" value="P:rRNA base methylation"/>
    <property type="evidence" value="ECO:0007669"/>
    <property type="project" value="TreeGrafter"/>
</dbReference>
<dbReference type="CDD" id="cd02440">
    <property type="entry name" value="AdoMet_MTases"/>
    <property type="match status" value="1"/>
</dbReference>
<dbReference type="Gene3D" id="3.10.450.720">
    <property type="match status" value="1"/>
</dbReference>
<dbReference type="Gene3D" id="3.40.50.150">
    <property type="entry name" value="Vaccinia Virus protein VP39"/>
    <property type="match status" value="1"/>
</dbReference>
<dbReference type="HAMAP" id="MF_01579">
    <property type="entry name" value="16SrRNA_methyltr_F"/>
    <property type="match status" value="1"/>
</dbReference>
<dbReference type="InterPro" id="IPR031341">
    <property type="entry name" value="Methyltr_RsmF_N"/>
</dbReference>
<dbReference type="InterPro" id="IPR049560">
    <property type="entry name" value="MeTrfase_RsmB-F_NOP2_cat"/>
</dbReference>
<dbReference type="InterPro" id="IPR001678">
    <property type="entry name" value="MeTrfase_RsmB-F_NOP2_dom"/>
</dbReference>
<dbReference type="InterPro" id="IPR027391">
    <property type="entry name" value="Nol1_Nop2_Fmu_2"/>
</dbReference>
<dbReference type="InterPro" id="IPR011023">
    <property type="entry name" value="Nop2p"/>
</dbReference>
<dbReference type="InterPro" id="IPR023267">
    <property type="entry name" value="RCMT"/>
</dbReference>
<dbReference type="InterPro" id="IPR023545">
    <property type="entry name" value="rRNA_ssu_MeTfrase_F"/>
</dbReference>
<dbReference type="InterPro" id="IPR029063">
    <property type="entry name" value="SAM-dependent_MTases_sf"/>
</dbReference>
<dbReference type="InterPro" id="IPR048457">
    <property type="entry name" value="YebU_pre-PUA_dom"/>
</dbReference>
<dbReference type="NCBIfam" id="TIGR00446">
    <property type="entry name" value="nop2p"/>
    <property type="match status" value="1"/>
</dbReference>
<dbReference type="NCBIfam" id="NF008898">
    <property type="entry name" value="PRK11933.1"/>
    <property type="match status" value="1"/>
</dbReference>
<dbReference type="PANTHER" id="PTHR22807:SF30">
    <property type="entry name" value="28S RRNA (CYTOSINE(4447)-C(5))-METHYLTRANSFERASE-RELATED"/>
    <property type="match status" value="1"/>
</dbReference>
<dbReference type="PANTHER" id="PTHR22807">
    <property type="entry name" value="NOP2 YEAST -RELATED NOL1/NOP2/FMU SUN DOMAIN-CONTAINING"/>
    <property type="match status" value="1"/>
</dbReference>
<dbReference type="Pfam" id="PF01189">
    <property type="entry name" value="Methyltr_RsmB-F"/>
    <property type="match status" value="1"/>
</dbReference>
<dbReference type="Pfam" id="PF17125">
    <property type="entry name" value="Methyltr_RsmF_N"/>
    <property type="match status" value="1"/>
</dbReference>
<dbReference type="Pfam" id="PF13636">
    <property type="entry name" value="Methyltranf_PUA"/>
    <property type="match status" value="1"/>
</dbReference>
<dbReference type="Pfam" id="PF21150">
    <property type="entry name" value="YebU_pre-PUA_dom"/>
    <property type="match status" value="1"/>
</dbReference>
<dbReference type="PRINTS" id="PR02008">
    <property type="entry name" value="RCMTFAMILY"/>
</dbReference>
<dbReference type="SUPFAM" id="SSF53335">
    <property type="entry name" value="S-adenosyl-L-methionine-dependent methyltransferases"/>
    <property type="match status" value="1"/>
</dbReference>
<dbReference type="PROSITE" id="PS51686">
    <property type="entry name" value="SAM_MT_RSMB_NOP"/>
    <property type="match status" value="1"/>
</dbReference>
<name>RSMF_SHEDO</name>
<accession>Q12MJ8</accession>
<organism>
    <name type="scientific">Shewanella denitrificans (strain OS217 / ATCC BAA-1090 / DSM 15013)</name>
    <dbReference type="NCBI Taxonomy" id="318161"/>
    <lineage>
        <taxon>Bacteria</taxon>
        <taxon>Pseudomonadati</taxon>
        <taxon>Pseudomonadota</taxon>
        <taxon>Gammaproteobacteria</taxon>
        <taxon>Alteromonadales</taxon>
        <taxon>Shewanellaceae</taxon>
        <taxon>Shewanella</taxon>
    </lineage>
</organism>
<gene>
    <name evidence="1" type="primary">rsmF</name>
    <name type="ordered locus">Sden_2046</name>
</gene>
<reference key="1">
    <citation type="submission" date="2006-03" db="EMBL/GenBank/DDBJ databases">
        <title>Complete sequence of Shewanella denitrificans OS217.</title>
        <authorList>
            <consortium name="US DOE Joint Genome Institute"/>
            <person name="Copeland A."/>
            <person name="Lucas S."/>
            <person name="Lapidus A."/>
            <person name="Barry K."/>
            <person name="Detter J.C."/>
            <person name="Glavina del Rio T."/>
            <person name="Hammon N."/>
            <person name="Israni S."/>
            <person name="Dalin E."/>
            <person name="Tice H."/>
            <person name="Pitluck S."/>
            <person name="Brettin T."/>
            <person name="Bruce D."/>
            <person name="Han C."/>
            <person name="Tapia R."/>
            <person name="Gilna P."/>
            <person name="Kiss H."/>
            <person name="Schmutz J."/>
            <person name="Larimer F."/>
            <person name="Land M."/>
            <person name="Hauser L."/>
            <person name="Kyrpides N."/>
            <person name="Lykidis A."/>
            <person name="Richardson P."/>
        </authorList>
    </citation>
    <scope>NUCLEOTIDE SEQUENCE [LARGE SCALE GENOMIC DNA]</scope>
    <source>
        <strain>OS217 / ATCC BAA-1090 / DSM 15013</strain>
    </source>
</reference>
<protein>
    <recommendedName>
        <fullName evidence="1">Ribosomal RNA small subunit methyltransferase F</fullName>
        <ecNumber evidence="1">2.1.1.178</ecNumber>
    </recommendedName>
    <alternativeName>
        <fullName evidence="1">16S rRNA m5C1407 methyltransferase</fullName>
    </alternativeName>
    <alternativeName>
        <fullName evidence="1">rRNA (cytosine-C(5)-)-methyltransferase RsmF</fullName>
    </alternativeName>
</protein>
<evidence type="ECO:0000255" key="1">
    <source>
        <dbReference type="HAMAP-Rule" id="MF_01579"/>
    </source>
</evidence>
<evidence type="ECO:0000256" key="2">
    <source>
        <dbReference type="SAM" id="MobiDB-lite"/>
    </source>
</evidence>
<proteinExistence type="inferred from homology"/>
<keyword id="KW-0963">Cytoplasm</keyword>
<keyword id="KW-0489">Methyltransferase</keyword>
<keyword id="KW-1185">Reference proteome</keyword>
<keyword id="KW-0694">RNA-binding</keyword>
<keyword id="KW-0698">rRNA processing</keyword>
<keyword id="KW-0949">S-adenosyl-L-methionine</keyword>
<keyword id="KW-0808">Transferase</keyword>
<feature type="chain" id="PRO_0000285010" description="Ribosomal RNA small subunit methyltransferase F">
    <location>
        <begin position="1"/>
        <end position="505"/>
    </location>
</feature>
<feature type="region of interest" description="Disordered" evidence="2">
    <location>
        <begin position="409"/>
        <end position="437"/>
    </location>
</feature>
<feature type="compositionally biased region" description="Low complexity" evidence="2">
    <location>
        <begin position="410"/>
        <end position="435"/>
    </location>
</feature>
<feature type="active site" description="Nucleophile" evidence="1">
    <location>
        <position position="245"/>
    </location>
</feature>
<feature type="binding site" evidence="1">
    <location>
        <begin position="123"/>
        <end position="129"/>
    </location>
    <ligand>
        <name>S-adenosyl-L-methionine</name>
        <dbReference type="ChEBI" id="CHEBI:59789"/>
    </ligand>
</feature>
<feature type="binding site" evidence="1">
    <location>
        <position position="147"/>
    </location>
    <ligand>
        <name>S-adenosyl-L-methionine</name>
        <dbReference type="ChEBI" id="CHEBI:59789"/>
    </ligand>
</feature>
<feature type="binding site" evidence="1">
    <location>
        <position position="174"/>
    </location>
    <ligand>
        <name>S-adenosyl-L-methionine</name>
        <dbReference type="ChEBI" id="CHEBI:59789"/>
    </ligand>
</feature>
<feature type="binding site" evidence="1">
    <location>
        <position position="192"/>
    </location>
    <ligand>
        <name>S-adenosyl-L-methionine</name>
        <dbReference type="ChEBI" id="CHEBI:59789"/>
    </ligand>
</feature>